<dbReference type="EMBL" id="CP000308">
    <property type="protein sequence ID" value="ABG13113.1"/>
    <property type="molecule type" value="Genomic_DNA"/>
</dbReference>
<dbReference type="RefSeq" id="WP_002211082.1">
    <property type="nucleotide sequence ID" value="NZ_CP009906.1"/>
</dbReference>
<dbReference type="SMR" id="Q1C8V9"/>
<dbReference type="KEGG" id="ypa:YPA_1146"/>
<dbReference type="Proteomes" id="UP000001971">
    <property type="component" value="Chromosome"/>
</dbReference>
<dbReference type="HAMAP" id="MF_00507">
    <property type="entry name" value="UPF0181"/>
    <property type="match status" value="1"/>
</dbReference>
<dbReference type="InterPro" id="IPR005371">
    <property type="entry name" value="UPF0181"/>
</dbReference>
<dbReference type="NCBIfam" id="NF003476">
    <property type="entry name" value="PRK05114.1"/>
    <property type="match status" value="1"/>
</dbReference>
<dbReference type="Pfam" id="PF03701">
    <property type="entry name" value="UPF0181"/>
    <property type="match status" value="1"/>
</dbReference>
<accession>Q1C8V9</accession>
<evidence type="ECO:0000255" key="1">
    <source>
        <dbReference type="HAMAP-Rule" id="MF_00507"/>
    </source>
</evidence>
<evidence type="ECO:0000256" key="2">
    <source>
        <dbReference type="SAM" id="MobiDB-lite"/>
    </source>
</evidence>
<gene>
    <name type="ordered locus">YPA_1146</name>
</gene>
<sequence length="85" mass="9720">MLAGMPSLSHEEQQEAVERIHKFMSEGMSSGEAIALVAAEIRERHQNDPQAMAIFEDHDFDEHTESDYRRDDEPDADDIEDPYEG</sequence>
<feature type="chain" id="PRO_0000258533" description="UPF0181 protein YPA_1146">
    <location>
        <begin position="1"/>
        <end position="85"/>
    </location>
</feature>
<feature type="region of interest" description="Disordered" evidence="2">
    <location>
        <begin position="50"/>
        <end position="85"/>
    </location>
</feature>
<feature type="compositionally biased region" description="Basic and acidic residues" evidence="2">
    <location>
        <begin position="55"/>
        <end position="72"/>
    </location>
</feature>
<feature type="compositionally biased region" description="Acidic residues" evidence="2">
    <location>
        <begin position="73"/>
        <end position="85"/>
    </location>
</feature>
<reference key="1">
    <citation type="journal article" date="2006" name="J. Bacteriol.">
        <title>Complete genome sequence of Yersinia pestis strains Antiqua and Nepal516: evidence of gene reduction in an emerging pathogen.</title>
        <authorList>
            <person name="Chain P.S.G."/>
            <person name="Hu P."/>
            <person name="Malfatti S.A."/>
            <person name="Radnedge L."/>
            <person name="Larimer F."/>
            <person name="Vergez L.M."/>
            <person name="Worsham P."/>
            <person name="Chu M.C."/>
            <person name="Andersen G.L."/>
        </authorList>
    </citation>
    <scope>NUCLEOTIDE SEQUENCE [LARGE SCALE GENOMIC DNA]</scope>
    <source>
        <strain>Antiqua</strain>
    </source>
</reference>
<proteinExistence type="inferred from homology"/>
<name>Y1146_YERPA</name>
<protein>
    <recommendedName>
        <fullName evidence="1">UPF0181 protein YPA_1146</fullName>
    </recommendedName>
</protein>
<comment type="similarity">
    <text evidence="1">Belongs to the UPF0181 family.</text>
</comment>
<organism>
    <name type="scientific">Yersinia pestis bv. Antiqua (strain Antiqua)</name>
    <dbReference type="NCBI Taxonomy" id="360102"/>
    <lineage>
        <taxon>Bacteria</taxon>
        <taxon>Pseudomonadati</taxon>
        <taxon>Pseudomonadota</taxon>
        <taxon>Gammaproteobacteria</taxon>
        <taxon>Enterobacterales</taxon>
        <taxon>Yersiniaceae</taxon>
        <taxon>Yersinia</taxon>
    </lineage>
</organism>